<protein>
    <recommendedName>
        <fullName>Beta-lactamase-like protein 2 homolog</fullName>
        <ecNumber>3.-.-.-</ecNumber>
    </recommendedName>
</protein>
<dbReference type="EC" id="3.-.-.-"/>
<dbReference type="EMBL" id="AL132949">
    <property type="protein sequence ID" value="CAB61094.1"/>
    <property type="molecule type" value="Genomic_DNA"/>
</dbReference>
<dbReference type="EMBL" id="AL132949">
    <property type="protein sequence ID" value="CAN99706.1"/>
    <property type="molecule type" value="Genomic_DNA"/>
</dbReference>
<dbReference type="RefSeq" id="NP_001122663.1">
    <molecule id="Q95Q18-2"/>
    <property type="nucleotide sequence ID" value="NM_001129191.3"/>
</dbReference>
<dbReference type="RefSeq" id="NP_497107.1">
    <molecule id="Q95Q18-1"/>
    <property type="nucleotide sequence ID" value="NM_064706.4"/>
</dbReference>
<dbReference type="SMR" id="Q95Q18"/>
<dbReference type="BioGRID" id="40437">
    <property type="interactions" value="9"/>
</dbReference>
<dbReference type="FunCoup" id="Q95Q18">
    <property type="interactions" value="2247"/>
</dbReference>
<dbReference type="STRING" id="6239.Y53F4B.39b.1"/>
<dbReference type="PaxDb" id="6239-Y53F4B.39b"/>
<dbReference type="PeptideAtlas" id="Q95Q18"/>
<dbReference type="EnsemblMetazoa" id="Y53F4B.39a.1">
    <molecule id="Q95Q18-1"/>
    <property type="protein sequence ID" value="Y53F4B.39a.1"/>
    <property type="gene ID" value="WBGene00013176"/>
</dbReference>
<dbReference type="EnsemblMetazoa" id="Y53F4B.39b.1">
    <molecule id="Q95Q18-2"/>
    <property type="protein sequence ID" value="Y53F4B.39b.1"/>
    <property type="gene ID" value="WBGene00013176"/>
</dbReference>
<dbReference type="GeneID" id="175161"/>
<dbReference type="KEGG" id="cel:CELE_Y53F4B.39"/>
<dbReference type="UCSC" id="Y53F4B.39b">
    <molecule id="Q95Q18-1"/>
    <property type="organism name" value="c. elegans"/>
</dbReference>
<dbReference type="AGR" id="WB:WBGene00013176"/>
<dbReference type="CTD" id="175161"/>
<dbReference type="WormBase" id="Y53F4B.39a">
    <molecule id="Q95Q18-1"/>
    <property type="protein sequence ID" value="CE24418"/>
    <property type="gene ID" value="WBGene00013176"/>
</dbReference>
<dbReference type="WormBase" id="Y53F4B.39b">
    <molecule id="Q95Q18-2"/>
    <property type="protein sequence ID" value="CE41183"/>
    <property type="gene ID" value="WBGene00013176"/>
</dbReference>
<dbReference type="eggNOG" id="KOG0813">
    <property type="taxonomic scope" value="Eukaryota"/>
</dbReference>
<dbReference type="GeneTree" id="ENSGT00390000001710"/>
<dbReference type="HOGENOM" id="CLU_048478_1_2_1"/>
<dbReference type="InParanoid" id="Q95Q18"/>
<dbReference type="OMA" id="GDHVMAW"/>
<dbReference type="OrthoDB" id="17458at2759"/>
<dbReference type="PhylomeDB" id="Q95Q18"/>
<dbReference type="PRO" id="PR:Q95Q18"/>
<dbReference type="Proteomes" id="UP000001940">
    <property type="component" value="Chromosome II"/>
</dbReference>
<dbReference type="Bgee" id="WBGene00013176">
    <property type="expression patterns" value="Expressed in larva and 3 other cell types or tissues"/>
</dbReference>
<dbReference type="GO" id="GO:0005759">
    <property type="term" value="C:mitochondrial matrix"/>
    <property type="evidence" value="ECO:0000318"/>
    <property type="project" value="GO_Central"/>
</dbReference>
<dbReference type="GO" id="GO:0046872">
    <property type="term" value="F:metal ion binding"/>
    <property type="evidence" value="ECO:0007669"/>
    <property type="project" value="UniProtKB-KW"/>
</dbReference>
<dbReference type="GO" id="GO:0004521">
    <property type="term" value="F:RNA endonuclease activity"/>
    <property type="evidence" value="ECO:0000318"/>
    <property type="project" value="GO_Central"/>
</dbReference>
<dbReference type="GO" id="GO:0003727">
    <property type="term" value="F:single-stranded RNA binding"/>
    <property type="evidence" value="ECO:0000318"/>
    <property type="project" value="GO_Central"/>
</dbReference>
<dbReference type="CDD" id="cd07722">
    <property type="entry name" value="LACTB2-like_MBL-fold"/>
    <property type="match status" value="1"/>
</dbReference>
<dbReference type="FunFam" id="1.10.10.10:FF:000867">
    <property type="entry name" value="Beta-lactamase-like protein 2 homolog"/>
    <property type="match status" value="1"/>
</dbReference>
<dbReference type="FunFam" id="3.60.15.10:FF:000017">
    <property type="entry name" value="Lactamase beta 2"/>
    <property type="match status" value="1"/>
</dbReference>
<dbReference type="Gene3D" id="3.60.15.10">
    <property type="entry name" value="Ribonuclease Z/Hydroxyacylglutathione hydrolase-like"/>
    <property type="match status" value="1"/>
</dbReference>
<dbReference type="Gene3D" id="1.10.10.10">
    <property type="entry name" value="Winged helix-like DNA-binding domain superfamily/Winged helix DNA-binding domain"/>
    <property type="match status" value="1"/>
</dbReference>
<dbReference type="InterPro" id="IPR047921">
    <property type="entry name" value="LACTB2-like_MBL-fold"/>
</dbReference>
<dbReference type="InterPro" id="IPR041516">
    <property type="entry name" value="LACTB2_WH"/>
</dbReference>
<dbReference type="InterPro" id="IPR001279">
    <property type="entry name" value="Metallo-B-lactamas"/>
</dbReference>
<dbReference type="InterPro" id="IPR036866">
    <property type="entry name" value="RibonucZ/Hydroxyglut_hydro"/>
</dbReference>
<dbReference type="InterPro" id="IPR050662">
    <property type="entry name" value="Sec-metab_biosynth-thioest"/>
</dbReference>
<dbReference type="InterPro" id="IPR036388">
    <property type="entry name" value="WH-like_DNA-bd_sf"/>
</dbReference>
<dbReference type="PANTHER" id="PTHR23131">
    <property type="entry name" value="ENDORIBONUCLEASE LACTB2"/>
    <property type="match status" value="1"/>
</dbReference>
<dbReference type="PANTHER" id="PTHR23131:SF0">
    <property type="entry name" value="ENDORIBONUCLEASE LACTB2"/>
    <property type="match status" value="1"/>
</dbReference>
<dbReference type="Pfam" id="PF17778">
    <property type="entry name" value="BLACT_WH"/>
    <property type="match status" value="1"/>
</dbReference>
<dbReference type="Pfam" id="PF00753">
    <property type="entry name" value="Lactamase_B"/>
    <property type="match status" value="1"/>
</dbReference>
<dbReference type="SMART" id="SM00849">
    <property type="entry name" value="Lactamase_B"/>
    <property type="match status" value="1"/>
</dbReference>
<dbReference type="SUPFAM" id="SSF56281">
    <property type="entry name" value="Metallo-hydrolase/oxidoreductase"/>
    <property type="match status" value="1"/>
</dbReference>
<feature type="chain" id="PRO_0000315749" description="Beta-lactamase-like protein 2 homolog">
    <location>
        <begin position="1"/>
        <end position="295"/>
    </location>
</feature>
<feature type="binding site" evidence="1">
    <location>
        <position position="79"/>
    </location>
    <ligand>
        <name>Zn(2+)</name>
        <dbReference type="ChEBI" id="CHEBI:29105"/>
        <label>1</label>
    </ligand>
</feature>
<feature type="binding site" evidence="1">
    <location>
        <position position="81"/>
    </location>
    <ligand>
        <name>Zn(2+)</name>
        <dbReference type="ChEBI" id="CHEBI:29105"/>
        <label>1</label>
    </ligand>
</feature>
<feature type="binding site" evidence="1">
    <location>
        <position position="83"/>
    </location>
    <ligand>
        <name>Zn(2+)</name>
        <dbReference type="ChEBI" id="CHEBI:29105"/>
        <label>2</label>
    </ligand>
</feature>
<feature type="binding site" evidence="1">
    <location>
        <position position="84"/>
    </location>
    <ligand>
        <name>Zn(2+)</name>
        <dbReference type="ChEBI" id="CHEBI:29105"/>
        <label>2</label>
    </ligand>
</feature>
<feature type="binding site" evidence="1">
    <location>
        <position position="141"/>
    </location>
    <ligand>
        <name>Zn(2+)</name>
        <dbReference type="ChEBI" id="CHEBI:29105"/>
        <label>1</label>
    </ligand>
</feature>
<feature type="binding site" evidence="1">
    <location>
        <position position="160"/>
    </location>
    <ligand>
        <name>Zn(2+)</name>
        <dbReference type="ChEBI" id="CHEBI:29105"/>
        <label>1</label>
    </ligand>
</feature>
<feature type="binding site" evidence="1">
    <location>
        <position position="160"/>
    </location>
    <ligand>
        <name>Zn(2+)</name>
        <dbReference type="ChEBI" id="CHEBI:29105"/>
        <label>2</label>
    </ligand>
</feature>
<feature type="binding site" evidence="1">
    <location>
        <position position="195"/>
    </location>
    <ligand>
        <name>Zn(2+)</name>
        <dbReference type="ChEBI" id="CHEBI:29105"/>
        <label>2</label>
    </ligand>
</feature>
<feature type="splice variant" id="VSP_030694" description="In isoform b." evidence="2">
    <original>M</original>
    <variation>MTAYVGRAWTMLRFYTDFAYAGVAYLVNSKAHRAM</variation>
    <location>
        <position position="1"/>
    </location>
</feature>
<evidence type="ECO:0000250" key="1"/>
<evidence type="ECO:0000305" key="2"/>
<sequence length="295" mass="33103">MPSLTHVEPIEKLSDAVTRILGHNPGPFTLQGTNTYLLGTGAKKILVDTGEPNVTEYISALKSVLASTNSHIEYIVITHWHGDHVGGIDNITDEILDKKKIPIYKMKRDKDEGVERFHYVDDGFEVAVDGATLKLIATPGHTADHFSLWLQEERALFSGDCILGEGTTVFEDLHDYMTSLQKIKDLNATRIYPGHGPVIDKVVEKVDEYIEHRMKREREIIKVLKEHEEITSMDVTNQVYADSPWAVRLAALNNVKLVLKKLCKDGVVENPHFETFKWIGGSSSGEEKKNESSNL</sequence>
<name>LACB2_CAEEL</name>
<reference key="1">
    <citation type="journal article" date="1998" name="Science">
        <title>Genome sequence of the nematode C. elegans: a platform for investigating biology.</title>
        <authorList>
            <consortium name="The C. elegans sequencing consortium"/>
        </authorList>
    </citation>
    <scope>NUCLEOTIDE SEQUENCE [LARGE SCALE GENOMIC DNA]</scope>
    <scope>ALTERNATIVE SPLICING</scope>
    <source>
        <strain>Bristol N2</strain>
    </source>
</reference>
<keyword id="KW-0025">Alternative splicing</keyword>
<keyword id="KW-0378">Hydrolase</keyword>
<keyword id="KW-0479">Metal-binding</keyword>
<keyword id="KW-1185">Reference proteome</keyword>
<keyword id="KW-0862">Zinc</keyword>
<gene>
    <name type="ORF">Y53F4B.39</name>
</gene>
<comment type="alternative products">
    <event type="alternative splicing"/>
    <isoform>
        <id>Q95Q18-1</id>
        <name>a</name>
        <sequence type="displayed"/>
    </isoform>
    <isoform>
        <id>Q95Q18-2</id>
        <name>b</name>
        <sequence type="described" ref="VSP_030694"/>
    </isoform>
</comment>
<comment type="similarity">
    <text evidence="2">Belongs to the metallo-beta-lactamase superfamily. Glyoxalase II family.</text>
</comment>
<organism>
    <name type="scientific">Caenorhabditis elegans</name>
    <dbReference type="NCBI Taxonomy" id="6239"/>
    <lineage>
        <taxon>Eukaryota</taxon>
        <taxon>Metazoa</taxon>
        <taxon>Ecdysozoa</taxon>
        <taxon>Nematoda</taxon>
        <taxon>Chromadorea</taxon>
        <taxon>Rhabditida</taxon>
        <taxon>Rhabditina</taxon>
        <taxon>Rhabditomorpha</taxon>
        <taxon>Rhabditoidea</taxon>
        <taxon>Rhabditidae</taxon>
        <taxon>Peloderinae</taxon>
        <taxon>Caenorhabditis</taxon>
    </lineage>
</organism>
<proteinExistence type="inferred from homology"/>
<accession>Q95Q18</accession>
<accession>A5PEY5</accession>